<gene>
    <name evidence="1" type="primary">yihI</name>
    <name type="ordered locus">SEN3791</name>
</gene>
<evidence type="ECO:0000255" key="1">
    <source>
        <dbReference type="HAMAP-Rule" id="MF_01058"/>
    </source>
</evidence>
<evidence type="ECO:0000256" key="2">
    <source>
        <dbReference type="SAM" id="MobiDB-lite"/>
    </source>
</evidence>
<comment type="function">
    <text evidence="1">A GTPase-activating protein (GAP) that modifies Der/EngA GTPase function. May play a role in ribosome biogenesis.</text>
</comment>
<comment type="subunit">
    <text evidence="1">Interacts with Der.</text>
</comment>
<comment type="similarity">
    <text evidence="1">Belongs to the YihI family.</text>
</comment>
<accession>B5QW98</accession>
<dbReference type="EMBL" id="AM933172">
    <property type="protein sequence ID" value="CAR35366.1"/>
    <property type="molecule type" value="Genomic_DNA"/>
</dbReference>
<dbReference type="RefSeq" id="WP_000743292.1">
    <property type="nucleotide sequence ID" value="NC_011294.1"/>
</dbReference>
<dbReference type="SMR" id="B5QW98"/>
<dbReference type="KEGG" id="set:SEN3791"/>
<dbReference type="HOGENOM" id="CLU_094104_2_0_6"/>
<dbReference type="Proteomes" id="UP000000613">
    <property type="component" value="Chromosome"/>
</dbReference>
<dbReference type="GO" id="GO:0005096">
    <property type="term" value="F:GTPase activator activity"/>
    <property type="evidence" value="ECO:0007669"/>
    <property type="project" value="UniProtKB-KW"/>
</dbReference>
<dbReference type="GO" id="GO:0042254">
    <property type="term" value="P:ribosome biogenesis"/>
    <property type="evidence" value="ECO:0007669"/>
    <property type="project" value="UniProtKB-KW"/>
</dbReference>
<dbReference type="HAMAP" id="MF_01058">
    <property type="entry name" value="GAP_YihI"/>
    <property type="match status" value="1"/>
</dbReference>
<dbReference type="InterPro" id="IPR007336">
    <property type="entry name" value="YihI"/>
</dbReference>
<dbReference type="NCBIfam" id="NF003560">
    <property type="entry name" value="PRK05244.1-1"/>
    <property type="match status" value="1"/>
</dbReference>
<dbReference type="Pfam" id="PF04220">
    <property type="entry name" value="YihI"/>
    <property type="match status" value="1"/>
</dbReference>
<proteinExistence type="inferred from homology"/>
<feature type="chain" id="PRO_1000136390" description="Der GTPase-activating protein YihI">
    <location>
        <begin position="1"/>
        <end position="171"/>
    </location>
</feature>
<feature type="region of interest" description="Disordered" evidence="2">
    <location>
        <begin position="1"/>
        <end position="99"/>
    </location>
</feature>
<feature type="region of interest" description="Disordered" evidence="2">
    <location>
        <begin position="145"/>
        <end position="171"/>
    </location>
</feature>
<feature type="compositionally biased region" description="Basic and acidic residues" evidence="2">
    <location>
        <begin position="20"/>
        <end position="30"/>
    </location>
</feature>
<feature type="compositionally biased region" description="Basic residues" evidence="2">
    <location>
        <begin position="31"/>
        <end position="40"/>
    </location>
</feature>
<feature type="compositionally biased region" description="Acidic residues" evidence="2">
    <location>
        <begin position="147"/>
        <end position="160"/>
    </location>
</feature>
<organism>
    <name type="scientific">Salmonella enteritidis PT4 (strain P125109)</name>
    <dbReference type="NCBI Taxonomy" id="550537"/>
    <lineage>
        <taxon>Bacteria</taxon>
        <taxon>Pseudomonadati</taxon>
        <taxon>Pseudomonadota</taxon>
        <taxon>Gammaproteobacteria</taxon>
        <taxon>Enterobacterales</taxon>
        <taxon>Enterobacteriaceae</taxon>
        <taxon>Salmonella</taxon>
    </lineage>
</organism>
<sequence length="171" mass="19213">MKKPTSAPRSKAFGKQRRKTREELNQEARDRKRLKKHRGHAPGSRAAGGNSASGGGNQNQQKDPRIGSKTPVPLGVTEKVTQQHKPKSEKPMLSPQAELDLLETDERLDALLERLEAGETLSAEDQAWVDAKLDRIDELMQKLGLSYDDDEEDDEEDEKQEDMMRLLRGGN</sequence>
<name>YIHI_SALEP</name>
<protein>
    <recommendedName>
        <fullName evidence="1">Der GTPase-activating protein YihI</fullName>
    </recommendedName>
</protein>
<reference key="1">
    <citation type="journal article" date="2008" name="Genome Res.">
        <title>Comparative genome analysis of Salmonella enteritidis PT4 and Salmonella gallinarum 287/91 provides insights into evolutionary and host adaptation pathways.</title>
        <authorList>
            <person name="Thomson N.R."/>
            <person name="Clayton D.J."/>
            <person name="Windhorst D."/>
            <person name="Vernikos G."/>
            <person name="Davidson S."/>
            <person name="Churcher C."/>
            <person name="Quail M.A."/>
            <person name="Stevens M."/>
            <person name="Jones M.A."/>
            <person name="Watson M."/>
            <person name="Barron A."/>
            <person name="Layton A."/>
            <person name="Pickard D."/>
            <person name="Kingsley R.A."/>
            <person name="Bignell A."/>
            <person name="Clark L."/>
            <person name="Harris B."/>
            <person name="Ormond D."/>
            <person name="Abdellah Z."/>
            <person name="Brooks K."/>
            <person name="Cherevach I."/>
            <person name="Chillingworth T."/>
            <person name="Woodward J."/>
            <person name="Norberczak H."/>
            <person name="Lord A."/>
            <person name="Arrowsmith C."/>
            <person name="Jagels K."/>
            <person name="Moule S."/>
            <person name="Mungall K."/>
            <person name="Saunders M."/>
            <person name="Whitehead S."/>
            <person name="Chabalgoity J.A."/>
            <person name="Maskell D."/>
            <person name="Humphreys T."/>
            <person name="Roberts M."/>
            <person name="Barrow P.A."/>
            <person name="Dougan G."/>
            <person name="Parkhill J."/>
        </authorList>
    </citation>
    <scope>NUCLEOTIDE SEQUENCE [LARGE SCALE GENOMIC DNA]</scope>
    <source>
        <strain>P125109</strain>
    </source>
</reference>
<keyword id="KW-0343">GTPase activation</keyword>
<keyword id="KW-0690">Ribosome biogenesis</keyword>